<feature type="chain" id="PRO_0000410249" description="ATP-dependent RNA helicase DBP2-A">
    <location>
        <begin position="1"/>
        <end position="540"/>
    </location>
</feature>
<feature type="domain" description="Helicase ATP-binding" evidence="2">
    <location>
        <begin position="141"/>
        <end position="316"/>
    </location>
</feature>
<feature type="domain" description="Helicase C-terminal" evidence="3">
    <location>
        <begin position="344"/>
        <end position="490"/>
    </location>
</feature>
<feature type="region of interest" description="RNA-binding RGG-box" evidence="1">
    <location>
        <begin position="492"/>
        <end position="519"/>
    </location>
</feature>
<feature type="region of interest" description="Disordered" evidence="4">
    <location>
        <begin position="494"/>
        <end position="540"/>
    </location>
</feature>
<feature type="short sequence motif" description="Q motif">
    <location>
        <begin position="110"/>
        <end position="138"/>
    </location>
</feature>
<feature type="short sequence motif" description="DEAD box">
    <location>
        <begin position="264"/>
        <end position="267"/>
    </location>
</feature>
<feature type="binding site" evidence="2">
    <location>
        <begin position="154"/>
        <end position="161"/>
    </location>
    <ligand>
        <name>ATP</name>
        <dbReference type="ChEBI" id="CHEBI:30616"/>
    </ligand>
</feature>
<organism>
    <name type="scientific">Cryptococcus neoformans var. neoformans serotype D (strain B-3501A)</name>
    <name type="common">Filobasidiella neoformans</name>
    <dbReference type="NCBI Taxonomy" id="283643"/>
    <lineage>
        <taxon>Eukaryota</taxon>
        <taxon>Fungi</taxon>
        <taxon>Dikarya</taxon>
        <taxon>Basidiomycota</taxon>
        <taxon>Agaricomycotina</taxon>
        <taxon>Tremellomycetes</taxon>
        <taxon>Tremellales</taxon>
        <taxon>Cryptococcaceae</taxon>
        <taxon>Cryptococcus</taxon>
        <taxon>Cryptococcus neoformans species complex</taxon>
    </lineage>
</organism>
<comment type="function">
    <text evidence="1">ATP-dependent RNA helicase involved nonsense-mediated mRNA decay and ribosome biogenesis through rRNA processing.</text>
</comment>
<comment type="catalytic activity">
    <reaction>
        <text>ATP + H2O = ADP + phosphate + H(+)</text>
        <dbReference type="Rhea" id="RHEA:13065"/>
        <dbReference type="ChEBI" id="CHEBI:15377"/>
        <dbReference type="ChEBI" id="CHEBI:15378"/>
        <dbReference type="ChEBI" id="CHEBI:30616"/>
        <dbReference type="ChEBI" id="CHEBI:43474"/>
        <dbReference type="ChEBI" id="CHEBI:456216"/>
        <dbReference type="EC" id="3.6.4.13"/>
    </reaction>
</comment>
<comment type="subunit">
    <text evidence="1">Associates with polysomes.</text>
</comment>
<comment type="subcellular location">
    <subcellularLocation>
        <location evidence="1">Cytoplasm</location>
    </subcellularLocation>
    <subcellularLocation>
        <location evidence="1">Nucleus</location>
    </subcellularLocation>
</comment>
<comment type="domain">
    <text>The Q motif is unique to and characteristic of the DEAD box family of RNA helicases and controls ATP binding and hydrolysis.</text>
</comment>
<comment type="similarity">
    <text evidence="5">Belongs to the DEAD box helicase family. DDX5/DBP2 subfamily.</text>
</comment>
<comment type="sequence caution" evidence="5">
    <conflict type="erroneous gene model prediction">
        <sequence resource="EMBL-CDS" id="EAL20020"/>
    </conflict>
</comment>
<comment type="sequence caution" evidence="5">
    <conflict type="erroneous gene model prediction">
        <sequence resource="EMBL-CDS" id="EAL20021"/>
    </conflict>
</comment>
<sequence>MSYGGGYGGGGYGGGYGGGGGGGGYGGGGGGYGGGYGGGGYGGGFGGDRMGNLGQGLHNIDWQNQSLAKFEKNFYVQDPRVTARSDAEVEAFRAEKEMKIQGKNVPRPITTFEEAGFPDYIMSEIRRMGFTAPSSIQCQAWPMALSGRDLVAIAETGSGKTISFCLPAMVHINAQPLLAPGDGPIVLILAPTRELAVQIQTEATKFGQSSRIRNTAIYGGAPKGPQIRDLQRGVEICVATPGRLIDMLETGKTNLKRVTYLVMDEADRMLDMGFEPQIRKIVSQIRPDRQTLLFSATWPKEVQRLAMDFLHDFIQVNIGSLDLTANHNVAQHVEVCTDFDKRSKLLSHLEKISQENGKVLIFVATKRVADDLTKFLRMDGWPALAIHGDKQQAERDWVLAEFKSGRSPIMLATDVASRGLDVRDIGYVINYDFPNNCEDYIHRIGRTGRAGRKGTSYTYFTMDNSKAARELVQILRESKADIPPELEEMAMYGGRGGGGGRGRGGRGGGRGGYGGGGGRGGYSSGANSYGGGGGGYSSRW</sequence>
<proteinExistence type="inferred from homology"/>
<evidence type="ECO:0000250" key="1"/>
<evidence type="ECO:0000255" key="2">
    <source>
        <dbReference type="PROSITE-ProRule" id="PRU00541"/>
    </source>
</evidence>
<evidence type="ECO:0000255" key="3">
    <source>
        <dbReference type="PROSITE-ProRule" id="PRU00542"/>
    </source>
</evidence>
<evidence type="ECO:0000256" key="4">
    <source>
        <dbReference type="SAM" id="MobiDB-lite"/>
    </source>
</evidence>
<evidence type="ECO:0000305" key="5"/>
<accession>P0CQ77</accession>
<accession>Q55QJ0</accession>
<accession>Q55QJ1</accession>
<accession>Q5KFM5</accession>
<accession>Q5KFM6</accession>
<name>DBP2_CRYNB</name>
<protein>
    <recommendedName>
        <fullName>ATP-dependent RNA helicase DBP2-A</fullName>
        <ecNumber>3.6.4.13</ecNumber>
    </recommendedName>
</protein>
<gene>
    <name type="primary">DBP2</name>
    <name type="ordered locus">CNBF3470</name>
</gene>
<dbReference type="EC" id="3.6.4.13"/>
<dbReference type="EMBL" id="AAEY01000032">
    <property type="protein sequence ID" value="EAL20020.1"/>
    <property type="status" value="ALT_SEQ"/>
    <property type="molecule type" value="Genomic_DNA"/>
</dbReference>
<dbReference type="EMBL" id="AAEY01000032">
    <property type="protein sequence ID" value="EAL20021.1"/>
    <property type="status" value="ALT_SEQ"/>
    <property type="molecule type" value="Genomic_DNA"/>
</dbReference>
<dbReference type="RefSeq" id="XP_774667.1">
    <property type="nucleotide sequence ID" value="XM_769574.1"/>
</dbReference>
<dbReference type="RefSeq" id="XP_774668.1">
    <property type="nucleotide sequence ID" value="XM_769575.1"/>
</dbReference>
<dbReference type="SMR" id="P0CQ77"/>
<dbReference type="EnsemblFungi" id="AAW43961">
    <property type="protein sequence ID" value="AAW43961"/>
    <property type="gene ID" value="CNF01240"/>
</dbReference>
<dbReference type="GeneID" id="4936899"/>
<dbReference type="KEGG" id="cnb:CNBF3470"/>
<dbReference type="HOGENOM" id="CLU_003041_16_9_1"/>
<dbReference type="OrthoDB" id="5547at5206"/>
<dbReference type="GO" id="GO:0005737">
    <property type="term" value="C:cytoplasm"/>
    <property type="evidence" value="ECO:0007669"/>
    <property type="project" value="UniProtKB-SubCell"/>
</dbReference>
<dbReference type="GO" id="GO:0005634">
    <property type="term" value="C:nucleus"/>
    <property type="evidence" value="ECO:0007669"/>
    <property type="project" value="UniProtKB-SubCell"/>
</dbReference>
<dbReference type="GO" id="GO:0005524">
    <property type="term" value="F:ATP binding"/>
    <property type="evidence" value="ECO:0007669"/>
    <property type="project" value="UniProtKB-KW"/>
</dbReference>
<dbReference type="GO" id="GO:0016887">
    <property type="term" value="F:ATP hydrolysis activity"/>
    <property type="evidence" value="ECO:0007669"/>
    <property type="project" value="RHEA"/>
</dbReference>
<dbReference type="GO" id="GO:0003723">
    <property type="term" value="F:RNA binding"/>
    <property type="evidence" value="ECO:0007669"/>
    <property type="project" value="UniProtKB-KW"/>
</dbReference>
<dbReference type="GO" id="GO:0003724">
    <property type="term" value="F:RNA helicase activity"/>
    <property type="evidence" value="ECO:0007669"/>
    <property type="project" value="UniProtKB-EC"/>
</dbReference>
<dbReference type="GO" id="GO:0000184">
    <property type="term" value="P:nuclear-transcribed mRNA catabolic process, nonsense-mediated decay"/>
    <property type="evidence" value="ECO:0007669"/>
    <property type="project" value="UniProtKB-KW"/>
</dbReference>
<dbReference type="GO" id="GO:0006364">
    <property type="term" value="P:rRNA processing"/>
    <property type="evidence" value="ECO:0007669"/>
    <property type="project" value="UniProtKB-KW"/>
</dbReference>
<dbReference type="CDD" id="cd17966">
    <property type="entry name" value="DEADc_DDX5_DDX17"/>
    <property type="match status" value="1"/>
</dbReference>
<dbReference type="CDD" id="cd18787">
    <property type="entry name" value="SF2_C_DEAD"/>
    <property type="match status" value="1"/>
</dbReference>
<dbReference type="FunFam" id="3.40.50.300:FF:000008">
    <property type="entry name" value="ATP-dependent RNA helicase RhlB"/>
    <property type="match status" value="1"/>
</dbReference>
<dbReference type="FunFam" id="3.40.50.300:FF:000079">
    <property type="entry name" value="probable ATP-dependent RNA helicase DDX17"/>
    <property type="match status" value="1"/>
</dbReference>
<dbReference type="Gene3D" id="3.40.50.300">
    <property type="entry name" value="P-loop containing nucleotide triphosphate hydrolases"/>
    <property type="match status" value="2"/>
</dbReference>
<dbReference type="InterPro" id="IPR011545">
    <property type="entry name" value="DEAD/DEAH_box_helicase_dom"/>
</dbReference>
<dbReference type="InterPro" id="IPR014001">
    <property type="entry name" value="Helicase_ATP-bd"/>
</dbReference>
<dbReference type="InterPro" id="IPR001650">
    <property type="entry name" value="Helicase_C-like"/>
</dbReference>
<dbReference type="InterPro" id="IPR027417">
    <property type="entry name" value="P-loop_NTPase"/>
</dbReference>
<dbReference type="InterPro" id="IPR000629">
    <property type="entry name" value="RNA-helicase_DEAD-box_CS"/>
</dbReference>
<dbReference type="InterPro" id="IPR014014">
    <property type="entry name" value="RNA_helicase_DEAD_Q_motif"/>
</dbReference>
<dbReference type="PANTHER" id="PTHR47958">
    <property type="entry name" value="ATP-DEPENDENT RNA HELICASE DBP3"/>
    <property type="match status" value="1"/>
</dbReference>
<dbReference type="Pfam" id="PF00270">
    <property type="entry name" value="DEAD"/>
    <property type="match status" value="1"/>
</dbReference>
<dbReference type="Pfam" id="PF00271">
    <property type="entry name" value="Helicase_C"/>
    <property type="match status" value="1"/>
</dbReference>
<dbReference type="SMART" id="SM00487">
    <property type="entry name" value="DEXDc"/>
    <property type="match status" value="1"/>
</dbReference>
<dbReference type="SMART" id="SM00490">
    <property type="entry name" value="HELICc"/>
    <property type="match status" value="1"/>
</dbReference>
<dbReference type="SUPFAM" id="SSF52540">
    <property type="entry name" value="P-loop containing nucleoside triphosphate hydrolases"/>
    <property type="match status" value="1"/>
</dbReference>
<dbReference type="PROSITE" id="PS00039">
    <property type="entry name" value="DEAD_ATP_HELICASE"/>
    <property type="match status" value="1"/>
</dbReference>
<dbReference type="PROSITE" id="PS51192">
    <property type="entry name" value="HELICASE_ATP_BIND_1"/>
    <property type="match status" value="1"/>
</dbReference>
<dbReference type="PROSITE" id="PS51194">
    <property type="entry name" value="HELICASE_CTER"/>
    <property type="match status" value="1"/>
</dbReference>
<dbReference type="PROSITE" id="PS51195">
    <property type="entry name" value="Q_MOTIF"/>
    <property type="match status" value="1"/>
</dbReference>
<keyword id="KW-0067">ATP-binding</keyword>
<keyword id="KW-0963">Cytoplasm</keyword>
<keyword id="KW-0347">Helicase</keyword>
<keyword id="KW-0378">Hydrolase</keyword>
<keyword id="KW-0866">Nonsense-mediated mRNA decay</keyword>
<keyword id="KW-0547">Nucleotide-binding</keyword>
<keyword id="KW-0539">Nucleus</keyword>
<keyword id="KW-0690">Ribosome biogenesis</keyword>
<keyword id="KW-0694">RNA-binding</keyword>
<keyword id="KW-0698">rRNA processing</keyword>
<reference key="1">
    <citation type="journal article" date="2005" name="Science">
        <title>The genome of the basidiomycetous yeast and human pathogen Cryptococcus neoformans.</title>
        <authorList>
            <person name="Loftus B.J."/>
            <person name="Fung E."/>
            <person name="Roncaglia P."/>
            <person name="Rowley D."/>
            <person name="Amedeo P."/>
            <person name="Bruno D."/>
            <person name="Vamathevan J."/>
            <person name="Miranda M."/>
            <person name="Anderson I.J."/>
            <person name="Fraser J.A."/>
            <person name="Allen J.E."/>
            <person name="Bosdet I.E."/>
            <person name="Brent M.R."/>
            <person name="Chiu R."/>
            <person name="Doering T.L."/>
            <person name="Donlin M.J."/>
            <person name="D'Souza C.A."/>
            <person name="Fox D.S."/>
            <person name="Grinberg V."/>
            <person name="Fu J."/>
            <person name="Fukushima M."/>
            <person name="Haas B.J."/>
            <person name="Huang J.C."/>
            <person name="Janbon G."/>
            <person name="Jones S.J.M."/>
            <person name="Koo H.L."/>
            <person name="Krzywinski M.I."/>
            <person name="Kwon-Chung K.J."/>
            <person name="Lengeler K.B."/>
            <person name="Maiti R."/>
            <person name="Marra M.A."/>
            <person name="Marra R.E."/>
            <person name="Mathewson C.A."/>
            <person name="Mitchell T.G."/>
            <person name="Pertea M."/>
            <person name="Riggs F.R."/>
            <person name="Salzberg S.L."/>
            <person name="Schein J.E."/>
            <person name="Shvartsbeyn A."/>
            <person name="Shin H."/>
            <person name="Shumway M."/>
            <person name="Specht C.A."/>
            <person name="Suh B.B."/>
            <person name="Tenney A."/>
            <person name="Utterback T.R."/>
            <person name="Wickes B.L."/>
            <person name="Wortman J.R."/>
            <person name="Wye N.H."/>
            <person name="Kronstad J.W."/>
            <person name="Lodge J.K."/>
            <person name="Heitman J."/>
            <person name="Davis R.W."/>
            <person name="Fraser C.M."/>
            <person name="Hyman R.W."/>
        </authorList>
    </citation>
    <scope>NUCLEOTIDE SEQUENCE [LARGE SCALE GENOMIC DNA]</scope>
    <source>
        <strain>B-3501A</strain>
    </source>
</reference>